<proteinExistence type="evidence at protein level"/>
<accession>Q8N2R8</accession>
<accession>A3KME2</accession>
<accession>Q8IXP4</accession>
<accession>Q8WZ07</accession>
<comment type="interaction">
    <interactant intactId="EBI-18138055">
        <id>Q8N2R8</id>
    </interactant>
    <interactant intactId="EBI-8469755">
        <id>Q6P1K8</id>
        <label>GTF2H2C_2</label>
    </interactant>
    <organismsDiffer>false</organismsDiffer>
    <experiments>3</experiments>
</comment>
<comment type="similarity">
    <text evidence="2">Belongs to the FAM43 family.</text>
</comment>
<comment type="sequence caution" evidence="2">
    <conflict type="frameshift">
        <sequence resource="EMBL-CDS" id="AAL55769"/>
    </conflict>
</comment>
<name>FA43A_HUMAN</name>
<sequence>MLPWKKHKFELLAEAPPRQASKPKGYAVSLHYSALSSLARACPEGALSRVGSMFRSKRKKLHITSEDPTYTVLYLGNATTIQARGDGCTDLAVGKIWSKSEAGRQGTKMKLTVSAQGIRMVHAEERALRRPGHLYLLHRVTYCVADARLPKVFAWVYRHELKHKAVMLRCHAVLVSKPEKAQAMALLLYQTSANALAEFKRLKRRDDARHQQQELVGAHTIPLVPLRKLLLHGPCCYKPPVERSRSAPKLGSITEDLLGEQLEQELQEEEEEEQPEGCPEEEENRAAEGDPAEEEAEAQRALVVAMHFECGDLLDTLENGRGEALGGGGGSLGPGAGPPPLLLGSASDMKAELSQLISDLGELSFGNDVRTLQADLRVTRLLSGDSTGSESSIEGGGPDATSATAGDSSRQADGASADEPHSG</sequence>
<protein>
    <recommendedName>
        <fullName>Protein FAM43A</fullName>
    </recommendedName>
</protein>
<dbReference type="EMBL" id="AF289585">
    <property type="protein sequence ID" value="AAL55769.1"/>
    <property type="status" value="ALT_FRAME"/>
    <property type="molecule type" value="mRNA"/>
</dbReference>
<dbReference type="EMBL" id="AK074503">
    <property type="protein sequence ID" value="BAC11027.1"/>
    <property type="molecule type" value="mRNA"/>
</dbReference>
<dbReference type="EMBL" id="CH471052">
    <property type="protein sequence ID" value="EAW78033.1"/>
    <property type="molecule type" value="Genomic_DNA"/>
</dbReference>
<dbReference type="EMBL" id="BC039689">
    <property type="protein sequence ID" value="AAH39689.1"/>
    <property type="molecule type" value="mRNA"/>
</dbReference>
<dbReference type="EMBL" id="BC064989">
    <property type="protein sequence ID" value="AAH64989.1"/>
    <property type="molecule type" value="mRNA"/>
</dbReference>
<dbReference type="CCDS" id="CCDS33923.1"/>
<dbReference type="RefSeq" id="NP_710157.2">
    <property type="nucleotide sequence ID" value="NM_153690.4"/>
</dbReference>
<dbReference type="SMR" id="Q8N2R8"/>
<dbReference type="BioGRID" id="126288">
    <property type="interactions" value="42"/>
</dbReference>
<dbReference type="FunCoup" id="Q8N2R8">
    <property type="interactions" value="147"/>
</dbReference>
<dbReference type="IntAct" id="Q8N2R8">
    <property type="interactions" value="30"/>
</dbReference>
<dbReference type="STRING" id="9606.ENSP00000371397"/>
<dbReference type="iPTMnet" id="Q8N2R8"/>
<dbReference type="PhosphoSitePlus" id="Q8N2R8"/>
<dbReference type="BioMuta" id="FAM43A"/>
<dbReference type="DMDM" id="51316022"/>
<dbReference type="jPOST" id="Q8N2R8"/>
<dbReference type="MassIVE" id="Q8N2R8"/>
<dbReference type="PaxDb" id="9606-ENSP00000371397"/>
<dbReference type="PeptideAtlas" id="Q8N2R8"/>
<dbReference type="ProteomicsDB" id="71730"/>
<dbReference type="Antibodypedia" id="68591">
    <property type="antibodies" value="33 antibodies from 10 providers"/>
</dbReference>
<dbReference type="DNASU" id="131583"/>
<dbReference type="Ensembl" id="ENST00000329759.6">
    <property type="protein sequence ID" value="ENSP00000371397.1"/>
    <property type="gene ID" value="ENSG00000185112.6"/>
</dbReference>
<dbReference type="GeneID" id="131583"/>
<dbReference type="KEGG" id="hsa:131583"/>
<dbReference type="MANE-Select" id="ENST00000329759.6">
    <property type="protein sequence ID" value="ENSP00000371397.1"/>
    <property type="RefSeq nucleotide sequence ID" value="NM_153690.5"/>
    <property type="RefSeq protein sequence ID" value="NP_710157.2"/>
</dbReference>
<dbReference type="UCSC" id="uc003fuj.4">
    <property type="organism name" value="human"/>
</dbReference>
<dbReference type="AGR" id="HGNC:26888"/>
<dbReference type="CTD" id="131583"/>
<dbReference type="GeneCards" id="FAM43A"/>
<dbReference type="HGNC" id="HGNC:26888">
    <property type="gene designation" value="FAM43A"/>
</dbReference>
<dbReference type="HPA" id="ENSG00000185112">
    <property type="expression patterns" value="Tissue enhanced (lymphoid)"/>
</dbReference>
<dbReference type="neXtProt" id="NX_Q8N2R8"/>
<dbReference type="OpenTargets" id="ENSG00000185112"/>
<dbReference type="PharmGKB" id="PA134950686"/>
<dbReference type="VEuPathDB" id="HostDB:ENSG00000185112"/>
<dbReference type="eggNOG" id="KOG4448">
    <property type="taxonomic scope" value="Eukaryota"/>
</dbReference>
<dbReference type="GeneTree" id="ENSGT00940000161593"/>
<dbReference type="HOGENOM" id="CLU_056673_2_0_1"/>
<dbReference type="InParanoid" id="Q8N2R8"/>
<dbReference type="OMA" id="AMHLECG"/>
<dbReference type="OrthoDB" id="5962185at2759"/>
<dbReference type="PAN-GO" id="Q8N2R8">
    <property type="GO annotations" value="0 GO annotations based on evolutionary models"/>
</dbReference>
<dbReference type="PhylomeDB" id="Q8N2R8"/>
<dbReference type="TreeFam" id="TF314159"/>
<dbReference type="PathwayCommons" id="Q8N2R8"/>
<dbReference type="SignaLink" id="Q8N2R8"/>
<dbReference type="BioGRID-ORCS" id="131583">
    <property type="hits" value="11 hits in 1151 CRISPR screens"/>
</dbReference>
<dbReference type="ChiTaRS" id="FAM43A">
    <property type="organism name" value="human"/>
</dbReference>
<dbReference type="GeneWiki" id="FAM43A"/>
<dbReference type="GenomeRNAi" id="131583"/>
<dbReference type="Pharos" id="Q8N2R8">
    <property type="development level" value="Tdark"/>
</dbReference>
<dbReference type="PRO" id="PR:Q8N2R8"/>
<dbReference type="Proteomes" id="UP000005640">
    <property type="component" value="Chromosome 3"/>
</dbReference>
<dbReference type="RNAct" id="Q8N2R8">
    <property type="molecule type" value="protein"/>
</dbReference>
<dbReference type="Bgee" id="ENSG00000185112">
    <property type="expression patterns" value="Expressed in pons and 162 other cell types or tissues"/>
</dbReference>
<dbReference type="CDD" id="cd01214">
    <property type="entry name" value="PTB_FAM43A"/>
    <property type="match status" value="1"/>
</dbReference>
<dbReference type="Gene3D" id="2.30.29.30">
    <property type="entry name" value="Pleckstrin-homology domain (PH domain)/Phosphotyrosine-binding domain (PTB)"/>
    <property type="match status" value="1"/>
</dbReference>
<dbReference type="InterPro" id="IPR051133">
    <property type="entry name" value="Adapter_Engulfment-Domain"/>
</dbReference>
<dbReference type="InterPro" id="IPR033930">
    <property type="entry name" value="FAM43A/B_PTB"/>
</dbReference>
<dbReference type="InterPro" id="IPR011993">
    <property type="entry name" value="PH-like_dom_sf"/>
</dbReference>
<dbReference type="InterPro" id="IPR006020">
    <property type="entry name" value="PTB/PI_dom"/>
</dbReference>
<dbReference type="PANTHER" id="PTHR11232">
    <property type="entry name" value="PHOSPHOTYROSINE INTERACTION DOMAIN-CONTAINING FAMILY MEMBER"/>
    <property type="match status" value="1"/>
</dbReference>
<dbReference type="PANTHER" id="PTHR11232:SF36">
    <property type="entry name" value="PROTEIN FAM43A"/>
    <property type="match status" value="1"/>
</dbReference>
<dbReference type="Pfam" id="PF14719">
    <property type="entry name" value="PID_2"/>
    <property type="match status" value="1"/>
</dbReference>
<dbReference type="SMART" id="SM00462">
    <property type="entry name" value="PTB"/>
    <property type="match status" value="1"/>
</dbReference>
<dbReference type="SUPFAM" id="SSF50729">
    <property type="entry name" value="PH domain-like"/>
    <property type="match status" value="1"/>
</dbReference>
<organism>
    <name type="scientific">Homo sapiens</name>
    <name type="common">Human</name>
    <dbReference type="NCBI Taxonomy" id="9606"/>
    <lineage>
        <taxon>Eukaryota</taxon>
        <taxon>Metazoa</taxon>
        <taxon>Chordata</taxon>
        <taxon>Craniata</taxon>
        <taxon>Vertebrata</taxon>
        <taxon>Euteleostomi</taxon>
        <taxon>Mammalia</taxon>
        <taxon>Eutheria</taxon>
        <taxon>Euarchontoglires</taxon>
        <taxon>Primates</taxon>
        <taxon>Haplorrhini</taxon>
        <taxon>Catarrhini</taxon>
        <taxon>Hominidae</taxon>
        <taxon>Homo</taxon>
    </lineage>
</organism>
<keyword id="KW-1267">Proteomics identification</keyword>
<keyword id="KW-1185">Reference proteome</keyword>
<gene>
    <name type="primary">FAM43A</name>
    <name type="ORF">PP7298</name>
</gene>
<feature type="chain" id="PRO_0000187024" description="Protein FAM43A">
    <location>
        <begin position="1"/>
        <end position="423"/>
    </location>
</feature>
<feature type="region of interest" description="Disordered" evidence="1">
    <location>
        <begin position="263"/>
        <end position="298"/>
    </location>
</feature>
<feature type="region of interest" description="Disordered" evidence="1">
    <location>
        <begin position="321"/>
        <end position="344"/>
    </location>
</feature>
<feature type="region of interest" description="Disordered" evidence="1">
    <location>
        <begin position="382"/>
        <end position="423"/>
    </location>
</feature>
<feature type="compositionally biased region" description="Acidic residues" evidence="1">
    <location>
        <begin position="263"/>
        <end position="283"/>
    </location>
</feature>
<feature type="compositionally biased region" description="Gly residues" evidence="1">
    <location>
        <begin position="323"/>
        <end position="335"/>
    </location>
</feature>
<feature type="compositionally biased region" description="Low complexity" evidence="1">
    <location>
        <begin position="383"/>
        <end position="393"/>
    </location>
</feature>
<feature type="compositionally biased region" description="Polar residues" evidence="1">
    <location>
        <begin position="401"/>
        <end position="411"/>
    </location>
</feature>
<feature type="sequence conflict" description="In Ref. 2; BAC11027." evidence="2" ref="2">
    <original>A</original>
    <variation>V</variation>
    <location>
        <position position="305"/>
    </location>
</feature>
<feature type="sequence conflict" description="In Ref. 1; AAL55769." evidence="2" ref="1">
    <original>A</original>
    <variation>V</variation>
    <location>
        <position position="351"/>
    </location>
</feature>
<reference key="1">
    <citation type="journal article" date="2004" name="Proc. Natl. Acad. Sci. U.S.A.">
        <title>Large-scale cDNA transfection screening for genes related to cancer development and progression.</title>
        <authorList>
            <person name="Wan D."/>
            <person name="Gong Y."/>
            <person name="Qin W."/>
            <person name="Zhang P."/>
            <person name="Li J."/>
            <person name="Wei L."/>
            <person name="Zhou X."/>
            <person name="Li H."/>
            <person name="Qiu X."/>
            <person name="Zhong F."/>
            <person name="He L."/>
            <person name="Yu J."/>
            <person name="Yao G."/>
            <person name="Jiang H."/>
            <person name="Qian L."/>
            <person name="Yu Y."/>
            <person name="Shu H."/>
            <person name="Chen X."/>
            <person name="Xu H."/>
            <person name="Guo M."/>
            <person name="Pan Z."/>
            <person name="Chen Y."/>
            <person name="Ge C."/>
            <person name="Yang S."/>
            <person name="Gu J."/>
        </authorList>
    </citation>
    <scope>NUCLEOTIDE SEQUENCE [LARGE SCALE MRNA]</scope>
</reference>
<reference key="2">
    <citation type="journal article" date="2004" name="Nat. Genet.">
        <title>Complete sequencing and characterization of 21,243 full-length human cDNAs.</title>
        <authorList>
            <person name="Ota T."/>
            <person name="Suzuki Y."/>
            <person name="Nishikawa T."/>
            <person name="Otsuki T."/>
            <person name="Sugiyama T."/>
            <person name="Irie R."/>
            <person name="Wakamatsu A."/>
            <person name="Hayashi K."/>
            <person name="Sato H."/>
            <person name="Nagai K."/>
            <person name="Kimura K."/>
            <person name="Makita H."/>
            <person name="Sekine M."/>
            <person name="Obayashi M."/>
            <person name="Nishi T."/>
            <person name="Shibahara T."/>
            <person name="Tanaka T."/>
            <person name="Ishii S."/>
            <person name="Yamamoto J."/>
            <person name="Saito K."/>
            <person name="Kawai Y."/>
            <person name="Isono Y."/>
            <person name="Nakamura Y."/>
            <person name="Nagahari K."/>
            <person name="Murakami K."/>
            <person name="Yasuda T."/>
            <person name="Iwayanagi T."/>
            <person name="Wagatsuma M."/>
            <person name="Shiratori A."/>
            <person name="Sudo H."/>
            <person name="Hosoiri T."/>
            <person name="Kaku Y."/>
            <person name="Kodaira H."/>
            <person name="Kondo H."/>
            <person name="Sugawara M."/>
            <person name="Takahashi M."/>
            <person name="Kanda K."/>
            <person name="Yokoi T."/>
            <person name="Furuya T."/>
            <person name="Kikkawa E."/>
            <person name="Omura Y."/>
            <person name="Abe K."/>
            <person name="Kamihara K."/>
            <person name="Katsuta N."/>
            <person name="Sato K."/>
            <person name="Tanikawa M."/>
            <person name="Yamazaki M."/>
            <person name="Ninomiya K."/>
            <person name="Ishibashi T."/>
            <person name="Yamashita H."/>
            <person name="Murakawa K."/>
            <person name="Fujimori K."/>
            <person name="Tanai H."/>
            <person name="Kimata M."/>
            <person name="Watanabe M."/>
            <person name="Hiraoka S."/>
            <person name="Chiba Y."/>
            <person name="Ishida S."/>
            <person name="Ono Y."/>
            <person name="Takiguchi S."/>
            <person name="Watanabe S."/>
            <person name="Yosida M."/>
            <person name="Hotuta T."/>
            <person name="Kusano J."/>
            <person name="Kanehori K."/>
            <person name="Takahashi-Fujii A."/>
            <person name="Hara H."/>
            <person name="Tanase T.-O."/>
            <person name="Nomura Y."/>
            <person name="Togiya S."/>
            <person name="Komai F."/>
            <person name="Hara R."/>
            <person name="Takeuchi K."/>
            <person name="Arita M."/>
            <person name="Imose N."/>
            <person name="Musashino K."/>
            <person name="Yuuki H."/>
            <person name="Oshima A."/>
            <person name="Sasaki N."/>
            <person name="Aotsuka S."/>
            <person name="Yoshikawa Y."/>
            <person name="Matsunawa H."/>
            <person name="Ichihara T."/>
            <person name="Shiohata N."/>
            <person name="Sano S."/>
            <person name="Moriya S."/>
            <person name="Momiyama H."/>
            <person name="Satoh N."/>
            <person name="Takami S."/>
            <person name="Terashima Y."/>
            <person name="Suzuki O."/>
            <person name="Nakagawa S."/>
            <person name="Senoh A."/>
            <person name="Mizoguchi H."/>
            <person name="Goto Y."/>
            <person name="Shimizu F."/>
            <person name="Wakebe H."/>
            <person name="Hishigaki H."/>
            <person name="Watanabe T."/>
            <person name="Sugiyama A."/>
            <person name="Takemoto M."/>
            <person name="Kawakami B."/>
            <person name="Yamazaki M."/>
            <person name="Watanabe K."/>
            <person name="Kumagai A."/>
            <person name="Itakura S."/>
            <person name="Fukuzumi Y."/>
            <person name="Fujimori Y."/>
            <person name="Komiyama M."/>
            <person name="Tashiro H."/>
            <person name="Tanigami A."/>
            <person name="Fujiwara T."/>
            <person name="Ono T."/>
            <person name="Yamada K."/>
            <person name="Fujii Y."/>
            <person name="Ozaki K."/>
            <person name="Hirao M."/>
            <person name="Ohmori Y."/>
            <person name="Kawabata A."/>
            <person name="Hikiji T."/>
            <person name="Kobatake N."/>
            <person name="Inagaki H."/>
            <person name="Ikema Y."/>
            <person name="Okamoto S."/>
            <person name="Okitani R."/>
            <person name="Kawakami T."/>
            <person name="Noguchi S."/>
            <person name="Itoh T."/>
            <person name="Shigeta K."/>
            <person name="Senba T."/>
            <person name="Matsumura K."/>
            <person name="Nakajima Y."/>
            <person name="Mizuno T."/>
            <person name="Morinaga M."/>
            <person name="Sasaki M."/>
            <person name="Togashi T."/>
            <person name="Oyama M."/>
            <person name="Hata H."/>
            <person name="Watanabe M."/>
            <person name="Komatsu T."/>
            <person name="Mizushima-Sugano J."/>
            <person name="Satoh T."/>
            <person name="Shirai Y."/>
            <person name="Takahashi Y."/>
            <person name="Nakagawa K."/>
            <person name="Okumura K."/>
            <person name="Nagase T."/>
            <person name="Nomura N."/>
            <person name="Kikuchi H."/>
            <person name="Masuho Y."/>
            <person name="Yamashita R."/>
            <person name="Nakai K."/>
            <person name="Yada T."/>
            <person name="Nakamura Y."/>
            <person name="Ohara O."/>
            <person name="Isogai T."/>
            <person name="Sugano S."/>
        </authorList>
    </citation>
    <scope>NUCLEOTIDE SEQUENCE [LARGE SCALE MRNA]</scope>
</reference>
<reference key="3">
    <citation type="submission" date="2005-09" db="EMBL/GenBank/DDBJ databases">
        <authorList>
            <person name="Mural R.J."/>
            <person name="Istrail S."/>
            <person name="Sutton G.G."/>
            <person name="Florea L."/>
            <person name="Halpern A.L."/>
            <person name="Mobarry C.M."/>
            <person name="Lippert R."/>
            <person name="Walenz B."/>
            <person name="Shatkay H."/>
            <person name="Dew I."/>
            <person name="Miller J.R."/>
            <person name="Flanigan M.J."/>
            <person name="Edwards N.J."/>
            <person name="Bolanos R."/>
            <person name="Fasulo D."/>
            <person name="Halldorsson B.V."/>
            <person name="Hannenhalli S."/>
            <person name="Turner R."/>
            <person name="Yooseph S."/>
            <person name="Lu F."/>
            <person name="Nusskern D.R."/>
            <person name="Shue B.C."/>
            <person name="Zheng X.H."/>
            <person name="Zhong F."/>
            <person name="Delcher A.L."/>
            <person name="Huson D.H."/>
            <person name="Kravitz S.A."/>
            <person name="Mouchard L."/>
            <person name="Reinert K."/>
            <person name="Remington K.A."/>
            <person name="Clark A.G."/>
            <person name="Waterman M.S."/>
            <person name="Eichler E.E."/>
            <person name="Adams M.D."/>
            <person name="Hunkapiller M.W."/>
            <person name="Myers E.W."/>
            <person name="Venter J.C."/>
        </authorList>
    </citation>
    <scope>NUCLEOTIDE SEQUENCE [LARGE SCALE GENOMIC DNA]</scope>
</reference>
<reference key="4">
    <citation type="journal article" date="2004" name="Genome Res.">
        <title>The status, quality, and expansion of the NIH full-length cDNA project: the Mammalian Gene Collection (MGC).</title>
        <authorList>
            <consortium name="The MGC Project Team"/>
        </authorList>
    </citation>
    <scope>NUCLEOTIDE SEQUENCE [LARGE SCALE MRNA]</scope>
    <source>
        <tissue>Eye</tissue>
        <tissue>Pancreas</tissue>
    </source>
</reference>
<evidence type="ECO:0000256" key="1">
    <source>
        <dbReference type="SAM" id="MobiDB-lite"/>
    </source>
</evidence>
<evidence type="ECO:0000305" key="2"/>